<reference evidence="5" key="1">
    <citation type="journal article" date="2005" name="Science">
        <title>The transcriptional landscape of the mammalian genome.</title>
        <authorList>
            <person name="Carninci P."/>
            <person name="Kasukawa T."/>
            <person name="Katayama S."/>
            <person name="Gough J."/>
            <person name="Frith M.C."/>
            <person name="Maeda N."/>
            <person name="Oyama R."/>
            <person name="Ravasi T."/>
            <person name="Lenhard B."/>
            <person name="Wells C."/>
            <person name="Kodzius R."/>
            <person name="Shimokawa K."/>
            <person name="Bajic V.B."/>
            <person name="Brenner S.E."/>
            <person name="Batalov S."/>
            <person name="Forrest A.R."/>
            <person name="Zavolan M."/>
            <person name="Davis M.J."/>
            <person name="Wilming L.G."/>
            <person name="Aidinis V."/>
            <person name="Allen J.E."/>
            <person name="Ambesi-Impiombato A."/>
            <person name="Apweiler R."/>
            <person name="Aturaliya R.N."/>
            <person name="Bailey T.L."/>
            <person name="Bansal M."/>
            <person name="Baxter L."/>
            <person name="Beisel K.W."/>
            <person name="Bersano T."/>
            <person name="Bono H."/>
            <person name="Chalk A.M."/>
            <person name="Chiu K.P."/>
            <person name="Choudhary V."/>
            <person name="Christoffels A."/>
            <person name="Clutterbuck D.R."/>
            <person name="Crowe M.L."/>
            <person name="Dalla E."/>
            <person name="Dalrymple B.P."/>
            <person name="de Bono B."/>
            <person name="Della Gatta G."/>
            <person name="di Bernardo D."/>
            <person name="Down T."/>
            <person name="Engstrom P."/>
            <person name="Fagiolini M."/>
            <person name="Faulkner G."/>
            <person name="Fletcher C.F."/>
            <person name="Fukushima T."/>
            <person name="Furuno M."/>
            <person name="Futaki S."/>
            <person name="Gariboldi M."/>
            <person name="Georgii-Hemming P."/>
            <person name="Gingeras T.R."/>
            <person name="Gojobori T."/>
            <person name="Green R.E."/>
            <person name="Gustincich S."/>
            <person name="Harbers M."/>
            <person name="Hayashi Y."/>
            <person name="Hensch T.K."/>
            <person name="Hirokawa N."/>
            <person name="Hill D."/>
            <person name="Huminiecki L."/>
            <person name="Iacono M."/>
            <person name="Ikeo K."/>
            <person name="Iwama A."/>
            <person name="Ishikawa T."/>
            <person name="Jakt M."/>
            <person name="Kanapin A."/>
            <person name="Katoh M."/>
            <person name="Kawasawa Y."/>
            <person name="Kelso J."/>
            <person name="Kitamura H."/>
            <person name="Kitano H."/>
            <person name="Kollias G."/>
            <person name="Krishnan S.P."/>
            <person name="Kruger A."/>
            <person name="Kummerfeld S.K."/>
            <person name="Kurochkin I.V."/>
            <person name="Lareau L.F."/>
            <person name="Lazarevic D."/>
            <person name="Lipovich L."/>
            <person name="Liu J."/>
            <person name="Liuni S."/>
            <person name="McWilliam S."/>
            <person name="Madan Babu M."/>
            <person name="Madera M."/>
            <person name="Marchionni L."/>
            <person name="Matsuda H."/>
            <person name="Matsuzawa S."/>
            <person name="Miki H."/>
            <person name="Mignone F."/>
            <person name="Miyake S."/>
            <person name="Morris K."/>
            <person name="Mottagui-Tabar S."/>
            <person name="Mulder N."/>
            <person name="Nakano N."/>
            <person name="Nakauchi H."/>
            <person name="Ng P."/>
            <person name="Nilsson R."/>
            <person name="Nishiguchi S."/>
            <person name="Nishikawa S."/>
            <person name="Nori F."/>
            <person name="Ohara O."/>
            <person name="Okazaki Y."/>
            <person name="Orlando V."/>
            <person name="Pang K.C."/>
            <person name="Pavan W.J."/>
            <person name="Pavesi G."/>
            <person name="Pesole G."/>
            <person name="Petrovsky N."/>
            <person name="Piazza S."/>
            <person name="Reed J."/>
            <person name="Reid J.F."/>
            <person name="Ring B.Z."/>
            <person name="Ringwald M."/>
            <person name="Rost B."/>
            <person name="Ruan Y."/>
            <person name="Salzberg S.L."/>
            <person name="Sandelin A."/>
            <person name="Schneider C."/>
            <person name="Schoenbach C."/>
            <person name="Sekiguchi K."/>
            <person name="Semple C.A."/>
            <person name="Seno S."/>
            <person name="Sessa L."/>
            <person name="Sheng Y."/>
            <person name="Shibata Y."/>
            <person name="Shimada H."/>
            <person name="Shimada K."/>
            <person name="Silva D."/>
            <person name="Sinclair B."/>
            <person name="Sperling S."/>
            <person name="Stupka E."/>
            <person name="Sugiura K."/>
            <person name="Sultana R."/>
            <person name="Takenaka Y."/>
            <person name="Taki K."/>
            <person name="Tammoja K."/>
            <person name="Tan S.L."/>
            <person name="Tang S."/>
            <person name="Taylor M.S."/>
            <person name="Tegner J."/>
            <person name="Teichmann S.A."/>
            <person name="Ueda H.R."/>
            <person name="van Nimwegen E."/>
            <person name="Verardo R."/>
            <person name="Wei C.L."/>
            <person name="Yagi K."/>
            <person name="Yamanishi H."/>
            <person name="Zabarovsky E."/>
            <person name="Zhu S."/>
            <person name="Zimmer A."/>
            <person name="Hide W."/>
            <person name="Bult C."/>
            <person name="Grimmond S.M."/>
            <person name="Teasdale R.D."/>
            <person name="Liu E.T."/>
            <person name="Brusic V."/>
            <person name="Quackenbush J."/>
            <person name="Wahlestedt C."/>
            <person name="Mattick J.S."/>
            <person name="Hume D.A."/>
            <person name="Kai C."/>
            <person name="Sasaki D."/>
            <person name="Tomaru Y."/>
            <person name="Fukuda S."/>
            <person name="Kanamori-Katayama M."/>
            <person name="Suzuki M."/>
            <person name="Aoki J."/>
            <person name="Arakawa T."/>
            <person name="Iida J."/>
            <person name="Imamura K."/>
            <person name="Itoh M."/>
            <person name="Kato T."/>
            <person name="Kawaji H."/>
            <person name="Kawagashira N."/>
            <person name="Kawashima T."/>
            <person name="Kojima M."/>
            <person name="Kondo S."/>
            <person name="Konno H."/>
            <person name="Nakano K."/>
            <person name="Ninomiya N."/>
            <person name="Nishio T."/>
            <person name="Okada M."/>
            <person name="Plessy C."/>
            <person name="Shibata K."/>
            <person name="Shiraki T."/>
            <person name="Suzuki S."/>
            <person name="Tagami M."/>
            <person name="Waki K."/>
            <person name="Watahiki A."/>
            <person name="Okamura-Oho Y."/>
            <person name="Suzuki H."/>
            <person name="Kawai J."/>
            <person name="Hayashizaki Y."/>
        </authorList>
    </citation>
    <scope>NUCLEOTIDE SEQUENCE [LARGE SCALE MRNA]</scope>
    <source>
        <strain evidence="7">C57BL/6J</strain>
        <strain evidence="6">NOD</strain>
        <tissue evidence="4">Amnion</tissue>
        <tissue evidence="6">Dendritic cell</tissue>
        <tissue evidence="7">Embryonic liver</tissue>
        <tissue evidence="5">Melanocyte</tissue>
    </source>
</reference>
<reference evidence="8" key="2">
    <citation type="journal article" date="2009" name="PLoS Biol.">
        <title>Lineage-specific biology revealed by a finished genome assembly of the mouse.</title>
        <authorList>
            <person name="Church D.M."/>
            <person name="Goodstadt L."/>
            <person name="Hillier L.W."/>
            <person name="Zody M.C."/>
            <person name="Goldstein S."/>
            <person name="She X."/>
            <person name="Bult C.J."/>
            <person name="Agarwala R."/>
            <person name="Cherry J.L."/>
            <person name="DiCuccio M."/>
            <person name="Hlavina W."/>
            <person name="Kapustin Y."/>
            <person name="Meric P."/>
            <person name="Maglott D."/>
            <person name="Birtle Z."/>
            <person name="Marques A.C."/>
            <person name="Graves T."/>
            <person name="Zhou S."/>
            <person name="Teague B."/>
            <person name="Potamousis K."/>
            <person name="Churas C."/>
            <person name="Place M."/>
            <person name="Herschleb J."/>
            <person name="Runnheim R."/>
            <person name="Forrest D."/>
            <person name="Amos-Landgraf J."/>
            <person name="Schwartz D.C."/>
            <person name="Cheng Z."/>
            <person name="Lindblad-Toh K."/>
            <person name="Eichler E.E."/>
            <person name="Ponting C.P."/>
        </authorList>
    </citation>
    <scope>NUCLEOTIDE SEQUENCE [LARGE SCALE GENOMIC DNA]</scope>
    <source>
        <strain evidence="8">C57BL/6J</strain>
    </source>
</reference>
<reference evidence="9" key="3">
    <citation type="submission" date="2005-07" db="EMBL/GenBank/DDBJ databases">
        <authorList>
            <person name="Mural R.J."/>
            <person name="Adams M.D."/>
            <person name="Myers E.W."/>
            <person name="Smith H.O."/>
            <person name="Venter J.C."/>
        </authorList>
    </citation>
    <scope>NUCLEOTIDE SEQUENCE [LARGE SCALE GENOMIC DNA]</scope>
</reference>
<keyword id="KW-0175">Coiled coil</keyword>
<keyword id="KW-0963">Cytoplasm</keyword>
<keyword id="KW-0396">Initiation factor</keyword>
<keyword id="KW-1017">Isopeptide bond</keyword>
<keyword id="KW-0597">Phosphoprotein</keyword>
<keyword id="KW-0648">Protein biosynthesis</keyword>
<keyword id="KW-1185">Reference proteome</keyword>
<keyword id="KW-0832">Ubl conjugation</keyword>
<evidence type="ECO:0000250" key="1">
    <source>
        <dbReference type="UniProtKB" id="O75822"/>
    </source>
</evidence>
<evidence type="ECO:0000255" key="2">
    <source>
        <dbReference type="HAMAP-Rule" id="MF_03009"/>
    </source>
</evidence>
<evidence type="ECO:0000256" key="3">
    <source>
        <dbReference type="SAM" id="MobiDB-lite"/>
    </source>
</evidence>
<evidence type="ECO:0000312" key="4">
    <source>
        <dbReference type="EMBL" id="BAE27721.1"/>
    </source>
</evidence>
<evidence type="ECO:0000312" key="5">
    <source>
        <dbReference type="EMBL" id="BAE28282.1"/>
    </source>
</evidence>
<evidence type="ECO:0000312" key="6">
    <source>
        <dbReference type="EMBL" id="BAE32935.1"/>
    </source>
</evidence>
<evidence type="ECO:0000312" key="7">
    <source>
        <dbReference type="EMBL" id="BAE36162.1"/>
    </source>
</evidence>
<evidence type="ECO:0000312" key="8">
    <source>
        <dbReference type="EMBL" id="CAM21780.1"/>
    </source>
</evidence>
<evidence type="ECO:0000312" key="9">
    <source>
        <dbReference type="EMBL" id="EDL28081.1"/>
    </source>
</evidence>
<gene>
    <name type="primary">Eif3j1</name>
    <name type="synonym">Eif3s1-1</name>
</gene>
<sequence length="261" mass="29344">MAAAAAAAAAAGDSDSWDADTFSMEDPVRKVAGGGTAGGDRWEGEDEDEDVKDNWDDDDDENKEEAEVKPEVKISEKKKIAEKIKEKERQQKKRQEEIKKRLEEPEESKVLTPEEQLADKLRLKKLQEESDLELAKETFGVNNTVYGIDAMNPSSRDDFTEFGKLLKDKITQYEKSLYYASFLEALVRDVCISLEIDDLKKITNSLTVLCSEKQKQEKQSKAKKKKKGVVPGGGLKATMKDDLADYGGYEGGYVQDYEDFM</sequence>
<name>EI3JA_MOUSE</name>
<feature type="chain" id="PRO_0000419334" description="Eukaryotic translation initiation factor 3 subunit J-A">
    <location>
        <begin position="1"/>
        <end position="261"/>
    </location>
</feature>
<feature type="region of interest" description="Disordered" evidence="3">
    <location>
        <begin position="1"/>
        <end position="113"/>
    </location>
</feature>
<feature type="region of interest" description="Sufficient for interaction with EIF3B" evidence="2">
    <location>
        <begin position="4"/>
        <end position="72"/>
    </location>
</feature>
<feature type="region of interest" description="Promotes stable association with the 40S ribosome" evidence="2">
    <location>
        <begin position="246"/>
        <end position="261"/>
    </location>
</feature>
<feature type="coiled-coil region" evidence="2">
    <location>
        <begin position="73"/>
        <end position="138"/>
    </location>
</feature>
<feature type="compositionally biased region" description="Low complexity" evidence="3">
    <location>
        <begin position="1"/>
        <end position="11"/>
    </location>
</feature>
<feature type="compositionally biased region" description="Acidic residues" evidence="3">
    <location>
        <begin position="43"/>
        <end position="64"/>
    </location>
</feature>
<feature type="compositionally biased region" description="Basic and acidic residues" evidence="3">
    <location>
        <begin position="65"/>
        <end position="109"/>
    </location>
</feature>
<feature type="modified residue" description="Phosphoserine" evidence="1 2">
    <location>
        <position position="14"/>
    </location>
</feature>
<feature type="modified residue" description="Phosphoserine" evidence="1 2">
    <location>
        <position position="16"/>
    </location>
</feature>
<feature type="modified residue" description="Phosphoserine" evidence="1 2">
    <location>
        <position position="23"/>
    </location>
</feature>
<feature type="modified residue" description="Phosphothreonine" evidence="1 2">
    <location>
        <position position="112"/>
    </location>
</feature>
<feature type="modified residue" description="Phosphoserine" evidence="1 2">
    <location>
        <position position="130"/>
    </location>
</feature>
<feature type="modified residue" description="Phosphotyrosine" evidence="1">
    <location>
        <position position="257"/>
    </location>
</feature>
<feature type="cross-link" description="Glycyl lysine isopeptide (Lys-Gly) (interchain with G-Cter in SUMO2)" evidence="1">
    <location>
        <position position="109"/>
    </location>
</feature>
<proteinExistence type="evidence at transcript level"/>
<dbReference type="EMBL" id="AK147154">
    <property type="protein sequence ID" value="BAE27721.1"/>
    <property type="molecule type" value="mRNA"/>
</dbReference>
<dbReference type="EMBL" id="AK148004">
    <property type="protein sequence ID" value="BAE28282.1"/>
    <property type="molecule type" value="mRNA"/>
</dbReference>
<dbReference type="EMBL" id="AK154934">
    <property type="protein sequence ID" value="BAE32935.1"/>
    <property type="molecule type" value="mRNA"/>
</dbReference>
<dbReference type="EMBL" id="AK161038">
    <property type="protein sequence ID" value="BAE36162.1"/>
    <property type="molecule type" value="mRNA"/>
</dbReference>
<dbReference type="EMBL" id="AL845457">
    <property type="protein sequence ID" value="CAM21780.1"/>
    <property type="molecule type" value="Genomic_DNA"/>
</dbReference>
<dbReference type="EMBL" id="CH466519">
    <property type="protein sequence ID" value="EDL28081.1"/>
    <property type="molecule type" value="Genomic_DNA"/>
</dbReference>
<dbReference type="CCDS" id="CCDS38219.1"/>
<dbReference type="RefSeq" id="NP_653128.2">
    <property type="nucleotide sequence ID" value="NM_144545.4"/>
</dbReference>
<dbReference type="SMR" id="Q3UGC7"/>
<dbReference type="BioGRID" id="219556">
    <property type="interactions" value="14"/>
</dbReference>
<dbReference type="FunCoup" id="Q3UGC7">
    <property type="interactions" value="2692"/>
</dbReference>
<dbReference type="IntAct" id="Q3UGC7">
    <property type="interactions" value="2"/>
</dbReference>
<dbReference type="MINT" id="Q3UGC7"/>
<dbReference type="STRING" id="10090.ENSMUSP00000028668"/>
<dbReference type="GlyGen" id="Q3UGC7">
    <property type="glycosylation" value="2 sites, 1 N-linked glycan (1 site), 1 O-linked glycan (1 site)"/>
</dbReference>
<dbReference type="iPTMnet" id="Q3UGC7"/>
<dbReference type="PhosphoSitePlus" id="Q3UGC7"/>
<dbReference type="jPOST" id="Q3UGC7"/>
<dbReference type="PaxDb" id="10090-ENSMUSP00000028668"/>
<dbReference type="PeptideAtlas" id="Q3UGC7"/>
<dbReference type="ProteomicsDB" id="277579"/>
<dbReference type="Pumba" id="Q3UGC7"/>
<dbReference type="DNASU" id="78655"/>
<dbReference type="Ensembl" id="ENSMUST00000028668.8">
    <property type="protein sequence ID" value="ENSMUSP00000028668.8"/>
    <property type="gene ID" value="ENSMUSG00000027236.9"/>
</dbReference>
<dbReference type="GeneID" id="78655"/>
<dbReference type="KEGG" id="mmu:78655"/>
<dbReference type="AGR" id="MGI:1925905"/>
<dbReference type="CTD" id="78655"/>
<dbReference type="MGI" id="MGI:1925905">
    <property type="gene designation" value="Eif3j1"/>
</dbReference>
<dbReference type="VEuPathDB" id="HostDB:ENSMUSG00000027236"/>
<dbReference type="eggNOG" id="KOG4813">
    <property type="taxonomic scope" value="Eukaryota"/>
</dbReference>
<dbReference type="GeneTree" id="ENSGT00390000018400"/>
<dbReference type="HOGENOM" id="CLU_085806_2_1_1"/>
<dbReference type="InParanoid" id="Q3UGC7"/>
<dbReference type="OMA" id="KPHYALW"/>
<dbReference type="OrthoDB" id="20381at2759"/>
<dbReference type="PhylomeDB" id="Q3UGC7"/>
<dbReference type="TreeFam" id="TF101514"/>
<dbReference type="Reactome" id="R-MMU-156827">
    <property type="pathway name" value="L13a-mediated translational silencing of Ceruloplasmin expression"/>
</dbReference>
<dbReference type="Reactome" id="R-MMU-72649">
    <property type="pathway name" value="Translation initiation complex formation"/>
</dbReference>
<dbReference type="Reactome" id="R-MMU-72689">
    <property type="pathway name" value="Formation of a pool of free 40S subunits"/>
</dbReference>
<dbReference type="Reactome" id="R-MMU-72695">
    <property type="pathway name" value="Formation of the ternary complex, and subsequently, the 43S complex"/>
</dbReference>
<dbReference type="Reactome" id="R-MMU-72702">
    <property type="pathway name" value="Ribosomal scanning and start codon recognition"/>
</dbReference>
<dbReference type="Reactome" id="R-MMU-72706">
    <property type="pathway name" value="GTP hydrolysis and joining of the 60S ribosomal subunit"/>
</dbReference>
<dbReference type="BioGRID-ORCS" id="78655">
    <property type="hits" value="15 hits in 57 CRISPR screens"/>
</dbReference>
<dbReference type="ChiTaRS" id="Eif3j1">
    <property type="organism name" value="mouse"/>
</dbReference>
<dbReference type="PRO" id="PR:Q3UGC7"/>
<dbReference type="Proteomes" id="UP000000589">
    <property type="component" value="Chromosome 2"/>
</dbReference>
<dbReference type="RNAct" id="Q3UGC7">
    <property type="molecule type" value="protein"/>
</dbReference>
<dbReference type="Bgee" id="ENSMUSG00000027236">
    <property type="expression patterns" value="Expressed in quadriceps femoris and 65 other cell types or tissues"/>
</dbReference>
<dbReference type="GO" id="GO:0016282">
    <property type="term" value="C:eukaryotic 43S preinitiation complex"/>
    <property type="evidence" value="ECO:0007669"/>
    <property type="project" value="UniProtKB-UniRule"/>
</dbReference>
<dbReference type="GO" id="GO:0033290">
    <property type="term" value="C:eukaryotic 48S preinitiation complex"/>
    <property type="evidence" value="ECO:0007669"/>
    <property type="project" value="UniProtKB-UniRule"/>
</dbReference>
<dbReference type="GO" id="GO:0005852">
    <property type="term" value="C:eukaryotic translation initiation factor 3 complex"/>
    <property type="evidence" value="ECO:0007669"/>
    <property type="project" value="UniProtKB-UniRule"/>
</dbReference>
<dbReference type="GO" id="GO:0003743">
    <property type="term" value="F:translation initiation factor activity"/>
    <property type="evidence" value="ECO:0007669"/>
    <property type="project" value="UniProtKB-UniRule"/>
</dbReference>
<dbReference type="GO" id="GO:0001732">
    <property type="term" value="P:formation of cytoplasmic translation initiation complex"/>
    <property type="evidence" value="ECO:0007669"/>
    <property type="project" value="UniProtKB-UniRule"/>
</dbReference>
<dbReference type="FunFam" id="1.10.246.60:FF:000001">
    <property type="entry name" value="Eukaryotic translation initiation factor 3 subunit J"/>
    <property type="match status" value="1"/>
</dbReference>
<dbReference type="Gene3D" id="1.10.246.60">
    <property type="entry name" value="Eukaryotic translation initiation factor 3 like domains"/>
    <property type="match status" value="1"/>
</dbReference>
<dbReference type="HAMAP" id="MF_03009">
    <property type="entry name" value="eIF3j"/>
    <property type="match status" value="1"/>
</dbReference>
<dbReference type="InterPro" id="IPR023194">
    <property type="entry name" value="eIF3-like_dom_sf"/>
</dbReference>
<dbReference type="InterPro" id="IPR013906">
    <property type="entry name" value="eIF3j"/>
</dbReference>
<dbReference type="PANTHER" id="PTHR21681">
    <property type="entry name" value="EUKARYOTIC TRANSLATION INITIATION FACTOR 3 SUBUNIT J"/>
    <property type="match status" value="1"/>
</dbReference>
<dbReference type="PANTHER" id="PTHR21681:SF0">
    <property type="entry name" value="EUKARYOTIC TRANSLATION INITIATION FACTOR 3 SUBUNIT J"/>
    <property type="match status" value="1"/>
</dbReference>
<dbReference type="Pfam" id="PF08597">
    <property type="entry name" value="eIF3_subunit"/>
    <property type="match status" value="1"/>
</dbReference>
<accession>Q3UGC7</accession>
<comment type="function">
    <text evidence="2">Component of the eukaryotic translation initiation factor 3 (eIF-3) complex, which is required for several steps in the initiation of protein synthesis. The eIF-3 complex associates with the 40S ribosome and facilitates the recruitment of eIF-1, eIF-1A, eIF-2:GTP:methionyl-tRNAi and eIF-5 to form the 43S pre-initiation complex (43S PIC). The eIF-3 complex stimulates mRNA recruitment to the 43S PIC and scanning of the mRNA for AUG recognition. The eIF-3 complex is also required for disassembly and recycling of post-termination ribosomal complexes and subsequently prevents premature joining of the 40S and 60S ribosomal subunits prior to initiation. The eIF-3 complex specifically targets and initiates translation of a subset of mRNAs involved in cell proliferation, including cell cycling, differentiation and apoptosis, and uses different modes of RNA stem-loop binding to exert either translational activation or repression. This subunit binds directly within the mRNA entry channel of the 40S ribosome to the aminoacyl (A) site. It may regulate the interaction between the 43S PIC and mRNA.</text>
</comment>
<comment type="subunit">
    <text evidence="1 2">Component of the eukaryotic translation initiation factor 3 (eIF-3) complex, which is composed of 13 subunits: EIF3A, EIF3B, EIF3C, EIF3D, EIF3E, EIF3F, EIF3G, EIF3H, EIF3I, EIF3J, EIF3K, EIF3L and EIF3M. The eIF-3 complex appears to include 3 stable modules: module A is composed of EIF3A, EIF3B, EIF3G and EIF3I; module B is composed of EIF3F, EIF3H, and EIF3M; and module C is composed of EIF3C, EIF3D, EIF3E, EIF3K and EIF3L. EIF3C of module C binds EIF3B of module A and EIF3H of module B, thereby linking the three modules. EIF3J is a labile subunit that binds to the eIF-3 complex via EIF3B. The eIF-3 complex interacts with RPS6KB1 under conditions of nutrient depletion. Mitogenic stimulation leads to binding and activation of a complex composed of MTOR and RPTOR, leading to phosphorylation and release of RPS6KB1 and binding of EIF4B to eIF-3.</text>
</comment>
<comment type="subcellular location">
    <subcellularLocation>
        <location evidence="1 2">Cytoplasm</location>
    </subcellularLocation>
</comment>
<comment type="PTM">
    <text evidence="1 2">Phosphorylated. Phosphorylation is enhanced upon serum stimulation.</text>
</comment>
<comment type="similarity">
    <text evidence="2">Belongs to the eIF-3 subunit J family.</text>
</comment>
<protein>
    <recommendedName>
        <fullName evidence="2">Eukaryotic translation initiation factor 3 subunit J-A</fullName>
        <shortName evidence="2">eIF3j-A</shortName>
    </recommendedName>
    <alternativeName>
        <fullName evidence="2">Eukaryotic translation initiation factor 3 subunit 1-A</fullName>
    </alternativeName>
    <alternativeName>
        <fullName evidence="2">eIF-3-alpha-A</fullName>
    </alternativeName>
    <alternativeName>
        <fullName evidence="2">eIF3 p35</fullName>
    </alternativeName>
</protein>
<organism>
    <name type="scientific">Mus musculus</name>
    <name type="common">Mouse</name>
    <dbReference type="NCBI Taxonomy" id="10090"/>
    <lineage>
        <taxon>Eukaryota</taxon>
        <taxon>Metazoa</taxon>
        <taxon>Chordata</taxon>
        <taxon>Craniata</taxon>
        <taxon>Vertebrata</taxon>
        <taxon>Euteleostomi</taxon>
        <taxon>Mammalia</taxon>
        <taxon>Eutheria</taxon>
        <taxon>Euarchontoglires</taxon>
        <taxon>Glires</taxon>
        <taxon>Rodentia</taxon>
        <taxon>Myomorpha</taxon>
        <taxon>Muroidea</taxon>
        <taxon>Muridae</taxon>
        <taxon>Murinae</taxon>
        <taxon>Mus</taxon>
        <taxon>Mus</taxon>
    </lineage>
</organism>